<proteinExistence type="evidence at protein level"/>
<accession>P81646</accession>
<protein>
    <recommendedName>
        <fullName>Alpha-lactalbumin</fullName>
    </recommendedName>
    <alternativeName>
        <fullName>Lactose synthase B protein</fullName>
    </alternativeName>
</protein>
<feature type="chain" id="PRO_0000208842" description="Alpha-lactalbumin">
    <location>
        <begin position="1"/>
        <end position="126"/>
    </location>
</feature>
<feature type="domain" description="C-type lysozyme" evidence="3">
    <location>
        <begin position="1"/>
        <end position="126"/>
    </location>
</feature>
<feature type="binding site" evidence="2">
    <location>
        <position position="84"/>
    </location>
    <ligand>
        <name>Ca(2+)</name>
        <dbReference type="ChEBI" id="CHEBI:29108"/>
    </ligand>
</feature>
<feature type="binding site" evidence="2">
    <location>
        <position position="87"/>
    </location>
    <ligand>
        <name>Ca(2+)</name>
        <dbReference type="ChEBI" id="CHEBI:29108"/>
    </ligand>
</feature>
<feature type="binding site" evidence="2">
    <location>
        <position position="89"/>
    </location>
    <ligand>
        <name>Ca(2+)</name>
        <dbReference type="ChEBI" id="CHEBI:29108"/>
    </ligand>
</feature>
<feature type="binding site" evidence="2">
    <location>
        <position position="92"/>
    </location>
    <ligand>
        <name>Ca(2+)</name>
        <dbReference type="ChEBI" id="CHEBI:29108"/>
    </ligand>
</feature>
<feature type="binding site" evidence="2">
    <location>
        <position position="93"/>
    </location>
    <ligand>
        <name>Ca(2+)</name>
        <dbReference type="ChEBI" id="CHEBI:29108"/>
    </ligand>
</feature>
<feature type="glycosylation site" description="N-linked (GlcNAc...) asparagine" evidence="1">
    <location>
        <position position="47"/>
    </location>
</feature>
<feature type="disulfide bond" evidence="3">
    <location>
        <begin position="6"/>
        <end position="126"/>
    </location>
</feature>
<feature type="disulfide bond" evidence="3">
    <location>
        <begin position="30"/>
        <end position="117"/>
    </location>
</feature>
<feature type="disulfide bond" evidence="3">
    <location>
        <begin position="63"/>
        <end position="82"/>
    </location>
</feature>
<feature type="disulfide bond" evidence="3">
    <location>
        <begin position="78"/>
        <end position="96"/>
    </location>
</feature>
<reference key="1">
    <citation type="journal article" date="1997" name="Comp. Biochem. Physiol.">
        <title>Lactose synthesis in a monotreme, the echidna (Tachyglossus aculeatus): isolation and amino acid sequence of echidna alpha-lactalbumin.</title>
        <authorList>
            <person name="Messer M."/>
            <person name="Griffiths M."/>
            <person name="Rismiller P.D."/>
            <person name="Shaw D.C."/>
        </authorList>
    </citation>
    <scope>PROTEIN SEQUENCE</scope>
    <source>
        <tissue>Milk</tissue>
    </source>
</reference>
<name>LALBA_TACAC</name>
<gene>
    <name type="primary">LALBA</name>
</gene>
<evidence type="ECO:0000250" key="1"/>
<evidence type="ECO:0000250" key="2">
    <source>
        <dbReference type="UniProtKB" id="P00711"/>
    </source>
</evidence>
<evidence type="ECO:0000255" key="3">
    <source>
        <dbReference type="PROSITE-ProRule" id="PRU00680"/>
    </source>
</evidence>
<comment type="function">
    <text>Regulatory subunit of lactose synthase, changes the substrate specificity of galactosyltransferase in the mammary gland making glucose a good acceptor substrate for this enzyme. This enables LS to synthesize lactose, the major carbohydrate component of milk. In other tissues, galactosyltransferase transfers galactose onto the N-acetylglucosamine of the oligosaccharide chains in glycoproteins.</text>
</comment>
<comment type="subunit">
    <text>Lactose synthase (LS) is a heterodimer of a catalytic component, beta1,4-galactosyltransferase (beta4Gal-T1) and a regulatory component, alpha-lactalbumin (LA).</text>
</comment>
<comment type="subcellular location">
    <subcellularLocation>
        <location>Secreted</location>
    </subcellularLocation>
</comment>
<comment type="tissue specificity">
    <text>Mammary gland specific. Secreted in milk.</text>
</comment>
<comment type="similarity">
    <text evidence="3">Belongs to the glycosyl hydrolase 22 family.</text>
</comment>
<sequence length="126" mass="14410">KVFEKCELSQMLKANGLDGFQGITLEEWICIAFHESGFDSRALNYYNGSSSHGLFQINRQYWCDGQDAKSTEPSVNACQISCDKLRDDDIEDDIKCVKKILKESQGITAWEAWQPFCIADLDQWKC</sequence>
<organism>
    <name type="scientific">Tachyglossus aculeatus aculeatus</name>
    <name type="common">Southeast Australian short-beaked echidna</name>
    <dbReference type="NCBI Taxonomy" id="49271"/>
    <lineage>
        <taxon>Eukaryota</taxon>
        <taxon>Metazoa</taxon>
        <taxon>Chordata</taxon>
        <taxon>Craniata</taxon>
        <taxon>Vertebrata</taxon>
        <taxon>Euteleostomi</taxon>
        <taxon>Mammalia</taxon>
        <taxon>Monotremata</taxon>
        <taxon>Tachyglossidae</taxon>
        <taxon>Tachyglossus</taxon>
    </lineage>
</organism>
<keyword id="KW-0106">Calcium</keyword>
<keyword id="KW-0903">Direct protein sequencing</keyword>
<keyword id="KW-1015">Disulfide bond</keyword>
<keyword id="KW-0325">Glycoprotein</keyword>
<keyword id="KW-0422">Lactose biosynthesis</keyword>
<keyword id="KW-0479">Metal-binding</keyword>
<keyword id="KW-0494">Milk protein</keyword>
<keyword id="KW-0964">Secreted</keyword>
<dbReference type="SMR" id="P81646"/>
<dbReference type="GlyCosmos" id="P81646">
    <property type="glycosylation" value="1 site, No reported glycans"/>
</dbReference>
<dbReference type="GO" id="GO:0005576">
    <property type="term" value="C:extracellular region"/>
    <property type="evidence" value="ECO:0007669"/>
    <property type="project" value="UniProtKB-SubCell"/>
</dbReference>
<dbReference type="GO" id="GO:0003796">
    <property type="term" value="F:lysozyme activity"/>
    <property type="evidence" value="ECO:0007669"/>
    <property type="project" value="InterPro"/>
</dbReference>
<dbReference type="GO" id="GO:0046872">
    <property type="term" value="F:metal ion binding"/>
    <property type="evidence" value="ECO:0007669"/>
    <property type="project" value="UniProtKB-KW"/>
</dbReference>
<dbReference type="GO" id="GO:0050829">
    <property type="term" value="P:defense response to Gram-negative bacterium"/>
    <property type="evidence" value="ECO:0007669"/>
    <property type="project" value="TreeGrafter"/>
</dbReference>
<dbReference type="GO" id="GO:0050830">
    <property type="term" value="P:defense response to Gram-positive bacterium"/>
    <property type="evidence" value="ECO:0007669"/>
    <property type="project" value="TreeGrafter"/>
</dbReference>
<dbReference type="GO" id="GO:0005989">
    <property type="term" value="P:lactose biosynthetic process"/>
    <property type="evidence" value="ECO:0007669"/>
    <property type="project" value="UniProtKB-KW"/>
</dbReference>
<dbReference type="CDD" id="cd16898">
    <property type="entry name" value="LYZ_LA"/>
    <property type="match status" value="1"/>
</dbReference>
<dbReference type="FunFam" id="1.10.530.10:FF:000001">
    <property type="entry name" value="Lysozyme C"/>
    <property type="match status" value="1"/>
</dbReference>
<dbReference type="Gene3D" id="1.10.530.10">
    <property type="match status" value="1"/>
</dbReference>
<dbReference type="InterPro" id="IPR001916">
    <property type="entry name" value="Glyco_hydro_22"/>
</dbReference>
<dbReference type="InterPro" id="IPR019799">
    <property type="entry name" value="Glyco_hydro_22_CS"/>
</dbReference>
<dbReference type="InterPro" id="IPR000974">
    <property type="entry name" value="Glyco_hydro_22_lys"/>
</dbReference>
<dbReference type="InterPro" id="IPR023346">
    <property type="entry name" value="Lysozyme-like_dom_sf"/>
</dbReference>
<dbReference type="PANTHER" id="PTHR11407:SF32">
    <property type="entry name" value="ALPHA-LACTALBUMIN"/>
    <property type="match status" value="1"/>
</dbReference>
<dbReference type="PANTHER" id="PTHR11407">
    <property type="entry name" value="LYSOZYME C"/>
    <property type="match status" value="1"/>
</dbReference>
<dbReference type="Pfam" id="PF00062">
    <property type="entry name" value="Lys"/>
    <property type="match status" value="1"/>
</dbReference>
<dbReference type="PRINTS" id="PR00137">
    <property type="entry name" value="LYSOZYME"/>
</dbReference>
<dbReference type="PRINTS" id="PR00135">
    <property type="entry name" value="LYZLACT"/>
</dbReference>
<dbReference type="SMART" id="SM00263">
    <property type="entry name" value="LYZ1"/>
    <property type="match status" value="1"/>
</dbReference>
<dbReference type="SUPFAM" id="SSF53955">
    <property type="entry name" value="Lysozyme-like"/>
    <property type="match status" value="1"/>
</dbReference>
<dbReference type="PROSITE" id="PS00128">
    <property type="entry name" value="GLYCOSYL_HYDROL_F22_1"/>
    <property type="match status" value="1"/>
</dbReference>
<dbReference type="PROSITE" id="PS51348">
    <property type="entry name" value="GLYCOSYL_HYDROL_F22_2"/>
    <property type="match status" value="1"/>
</dbReference>